<accession>Q6BMV2</accession>
<accession>B5RU81</accession>
<dbReference type="EC" id="2.3.1.225"/>
<dbReference type="EMBL" id="CR382138">
    <property type="protein sequence ID" value="CAR66258.1"/>
    <property type="molecule type" value="Genomic_DNA"/>
</dbReference>
<dbReference type="RefSeq" id="XP_002770727.1">
    <property type="nucleotide sequence ID" value="XM_002770681.1"/>
</dbReference>
<dbReference type="SMR" id="Q6BMV2"/>
<dbReference type="FunCoup" id="Q6BMV2">
    <property type="interactions" value="473"/>
</dbReference>
<dbReference type="STRING" id="284592.Q6BMV2"/>
<dbReference type="GeneID" id="8998861"/>
<dbReference type="KEGG" id="dha:DEHA2F02398g"/>
<dbReference type="VEuPathDB" id="FungiDB:DEHA2F02398g"/>
<dbReference type="eggNOG" id="KOG1315">
    <property type="taxonomic scope" value="Eukaryota"/>
</dbReference>
<dbReference type="HOGENOM" id="CLU_027721_0_0_1"/>
<dbReference type="InParanoid" id="Q6BMV2"/>
<dbReference type="OMA" id="YTYFKVI"/>
<dbReference type="OrthoDB" id="302728at2759"/>
<dbReference type="Proteomes" id="UP000000599">
    <property type="component" value="Chromosome F"/>
</dbReference>
<dbReference type="GO" id="GO:0005774">
    <property type="term" value="C:vacuolar membrane"/>
    <property type="evidence" value="ECO:0007669"/>
    <property type="project" value="UniProtKB-SubCell"/>
</dbReference>
<dbReference type="GO" id="GO:0019706">
    <property type="term" value="F:protein-cysteine S-palmitoyltransferase activity"/>
    <property type="evidence" value="ECO:0007669"/>
    <property type="project" value="UniProtKB-EC"/>
</dbReference>
<dbReference type="InterPro" id="IPR001594">
    <property type="entry name" value="Palmitoyltrfase_DHHC"/>
</dbReference>
<dbReference type="InterPro" id="IPR039859">
    <property type="entry name" value="PFA4/ZDH16/20/ERF2-like"/>
</dbReference>
<dbReference type="PANTHER" id="PTHR12246">
    <property type="entry name" value="PALMITOYLTRANSFERASE ZDHHC16"/>
    <property type="match status" value="1"/>
</dbReference>
<dbReference type="Pfam" id="PF01529">
    <property type="entry name" value="DHHC"/>
    <property type="match status" value="1"/>
</dbReference>
<dbReference type="PROSITE" id="PS50216">
    <property type="entry name" value="DHHC"/>
    <property type="match status" value="1"/>
</dbReference>
<name>PFA3_DEBHA</name>
<comment type="function">
    <text evidence="1">Palmitoyltransferase specific for VAC8. Palmitoylates VAC8 at one or more of its N-terminal cysteine residues, which is required for its proper membrane localization (By similarity).</text>
</comment>
<comment type="catalytic activity">
    <reaction>
        <text>L-cysteinyl-[protein] + hexadecanoyl-CoA = S-hexadecanoyl-L-cysteinyl-[protein] + CoA</text>
        <dbReference type="Rhea" id="RHEA:36683"/>
        <dbReference type="Rhea" id="RHEA-COMP:10131"/>
        <dbReference type="Rhea" id="RHEA-COMP:11032"/>
        <dbReference type="ChEBI" id="CHEBI:29950"/>
        <dbReference type="ChEBI" id="CHEBI:57287"/>
        <dbReference type="ChEBI" id="CHEBI:57379"/>
        <dbReference type="ChEBI" id="CHEBI:74151"/>
        <dbReference type="EC" id="2.3.1.225"/>
    </reaction>
</comment>
<comment type="subcellular location">
    <subcellularLocation>
        <location evidence="1">Vacuole membrane</location>
        <topology evidence="1">Multi-pass membrane protein</topology>
    </subcellularLocation>
</comment>
<comment type="domain">
    <text evidence="1">The DHHC domain is required for palmitoyltransferase activity.</text>
</comment>
<comment type="PTM">
    <text evidence="1">Autopalmitoylated.</text>
</comment>
<comment type="similarity">
    <text evidence="4">Belongs to the DHHC palmitoyltransferase family. PFA3 subfamily.</text>
</comment>
<feature type="chain" id="PRO_0000212953" description="Palmitoyltransferase PFA3">
    <location>
        <begin position="1"/>
        <end position="405"/>
    </location>
</feature>
<feature type="topological domain" description="Cytoplasmic" evidence="2">
    <location>
        <begin position="1"/>
        <end position="27"/>
    </location>
</feature>
<feature type="transmembrane region" description="Helical" evidence="2">
    <location>
        <begin position="28"/>
        <end position="48"/>
    </location>
</feature>
<feature type="topological domain" description="Lumenal" evidence="2">
    <location>
        <begin position="49"/>
        <end position="62"/>
    </location>
</feature>
<feature type="transmembrane region" description="Helical" evidence="2">
    <location>
        <begin position="63"/>
        <end position="83"/>
    </location>
</feature>
<feature type="topological domain" description="Cytoplasmic" evidence="2">
    <location>
        <begin position="84"/>
        <end position="214"/>
    </location>
</feature>
<feature type="transmembrane region" description="Helical" evidence="2">
    <location>
        <begin position="215"/>
        <end position="235"/>
    </location>
</feature>
<feature type="topological domain" description="Lumenal" evidence="2">
    <location>
        <begin position="236"/>
        <end position="251"/>
    </location>
</feature>
<feature type="transmembrane region" description="Helical" evidence="2">
    <location>
        <begin position="252"/>
        <end position="272"/>
    </location>
</feature>
<feature type="topological domain" description="Cytoplasmic" evidence="2">
    <location>
        <begin position="273"/>
        <end position="405"/>
    </location>
</feature>
<feature type="domain" description="DHHC" evidence="3">
    <location>
        <begin position="167"/>
        <end position="217"/>
    </location>
</feature>
<protein>
    <recommendedName>
        <fullName>Palmitoyltransferase PFA3</fullName>
        <ecNumber>2.3.1.225</ecNumber>
    </recommendedName>
    <alternativeName>
        <fullName>Protein fatty acyltransferase 3</fullName>
    </alternativeName>
</protein>
<organism>
    <name type="scientific">Debaryomyces hansenii (strain ATCC 36239 / CBS 767 / BCRC 21394 / JCM 1990 / NBRC 0083 / IGC 2968)</name>
    <name type="common">Yeast</name>
    <name type="synonym">Torulaspora hansenii</name>
    <dbReference type="NCBI Taxonomy" id="284592"/>
    <lineage>
        <taxon>Eukaryota</taxon>
        <taxon>Fungi</taxon>
        <taxon>Dikarya</taxon>
        <taxon>Ascomycota</taxon>
        <taxon>Saccharomycotina</taxon>
        <taxon>Pichiomycetes</taxon>
        <taxon>Debaryomycetaceae</taxon>
        <taxon>Debaryomyces</taxon>
    </lineage>
</organism>
<gene>
    <name type="primary">PFA3</name>
    <name type="ordered locus">DEHA2F02398g</name>
</gene>
<keyword id="KW-0012">Acyltransferase</keyword>
<keyword id="KW-0449">Lipoprotein</keyword>
<keyword id="KW-0472">Membrane</keyword>
<keyword id="KW-0564">Palmitate</keyword>
<keyword id="KW-1185">Reference proteome</keyword>
<keyword id="KW-0808">Transferase</keyword>
<keyword id="KW-0812">Transmembrane</keyword>
<keyword id="KW-1133">Transmembrane helix</keyword>
<keyword id="KW-0926">Vacuole</keyword>
<proteinExistence type="inferred from homology"/>
<reference key="1">
    <citation type="journal article" date="2004" name="Nature">
        <title>Genome evolution in yeasts.</title>
        <authorList>
            <person name="Dujon B."/>
            <person name="Sherman D."/>
            <person name="Fischer G."/>
            <person name="Durrens P."/>
            <person name="Casaregola S."/>
            <person name="Lafontaine I."/>
            <person name="de Montigny J."/>
            <person name="Marck C."/>
            <person name="Neuveglise C."/>
            <person name="Talla E."/>
            <person name="Goffard N."/>
            <person name="Frangeul L."/>
            <person name="Aigle M."/>
            <person name="Anthouard V."/>
            <person name="Babour A."/>
            <person name="Barbe V."/>
            <person name="Barnay S."/>
            <person name="Blanchin S."/>
            <person name="Beckerich J.-M."/>
            <person name="Beyne E."/>
            <person name="Bleykasten C."/>
            <person name="Boisrame A."/>
            <person name="Boyer J."/>
            <person name="Cattolico L."/>
            <person name="Confanioleri F."/>
            <person name="de Daruvar A."/>
            <person name="Despons L."/>
            <person name="Fabre E."/>
            <person name="Fairhead C."/>
            <person name="Ferry-Dumazet H."/>
            <person name="Groppi A."/>
            <person name="Hantraye F."/>
            <person name="Hennequin C."/>
            <person name="Jauniaux N."/>
            <person name="Joyet P."/>
            <person name="Kachouri R."/>
            <person name="Kerrest A."/>
            <person name="Koszul R."/>
            <person name="Lemaire M."/>
            <person name="Lesur I."/>
            <person name="Ma L."/>
            <person name="Muller H."/>
            <person name="Nicaud J.-M."/>
            <person name="Nikolski M."/>
            <person name="Oztas S."/>
            <person name="Ozier-Kalogeropoulos O."/>
            <person name="Pellenz S."/>
            <person name="Potier S."/>
            <person name="Richard G.-F."/>
            <person name="Straub M.-L."/>
            <person name="Suleau A."/>
            <person name="Swennen D."/>
            <person name="Tekaia F."/>
            <person name="Wesolowski-Louvel M."/>
            <person name="Westhof E."/>
            <person name="Wirth B."/>
            <person name="Zeniou-Meyer M."/>
            <person name="Zivanovic Y."/>
            <person name="Bolotin-Fukuhara M."/>
            <person name="Thierry A."/>
            <person name="Bouchier C."/>
            <person name="Caudron B."/>
            <person name="Scarpelli C."/>
            <person name="Gaillardin C."/>
            <person name="Weissenbach J."/>
            <person name="Wincker P."/>
            <person name="Souciet J.-L."/>
        </authorList>
    </citation>
    <scope>NUCLEOTIDE SEQUENCE [LARGE SCALE GENOMIC DNA]</scope>
    <source>
        <strain>ATCC 36239 / CBS 767 / BCRC 21394 / JCM 1990 / NBRC 0083 / IGC 2968</strain>
    </source>
</reference>
<evidence type="ECO:0000250" key="1"/>
<evidence type="ECO:0000255" key="2"/>
<evidence type="ECO:0000255" key="3">
    <source>
        <dbReference type="PROSITE-ProRule" id="PRU00067"/>
    </source>
</evidence>
<evidence type="ECO:0000305" key="4"/>
<sequence>MLISHPRIMIRHAPWVTSIETFCCSLATLFPKVFYTSVLTWSVYALIVHGCYDTLMTTQETSIFAIAIGLIGLTLYILCLYTYFKVLRAGPGSPSDFEELRIRNILSLSKPKYNSANPYDTNDNMATSASLLANAEGVDEIESIESEQPPSEYMTLHMLKSNNSSYRYCTKCSVWKPDRCHHCSTCNRCVLRMDHHCPWFAMCVGFYNHKFFAQFLMYLTAYSGFDFVVSLSILWKFFADEKYNDHYLSLNLVFLFVLSLAFFITVGGFSAFSLYLVFRNKTTIEFQENRWNFKNDKNGKSFQYEFDGSGKKKKLGNIFDLGCGRNWRSIMGPSWYYWLLPVTVTNKSIDARLENGINFEIDQDVYDRWCYNAQLQDQLNQQLADYKNRIRMEREANQTTDTNPF</sequence>